<dbReference type="EC" id="1.4.99.-" evidence="1"/>
<dbReference type="EMBL" id="CP000378">
    <property type="protein sequence ID" value="ABF75496.1"/>
    <property type="molecule type" value="Genomic_DNA"/>
</dbReference>
<dbReference type="SMR" id="Q1BY09"/>
<dbReference type="HOGENOM" id="CLU_007884_9_2_4"/>
<dbReference type="UniPathway" id="UPA00043">
    <property type="reaction ID" value="UER00498"/>
</dbReference>
<dbReference type="GO" id="GO:0005737">
    <property type="term" value="C:cytoplasm"/>
    <property type="evidence" value="ECO:0007669"/>
    <property type="project" value="TreeGrafter"/>
</dbReference>
<dbReference type="GO" id="GO:0005886">
    <property type="term" value="C:plasma membrane"/>
    <property type="evidence" value="ECO:0007669"/>
    <property type="project" value="TreeGrafter"/>
</dbReference>
<dbReference type="GO" id="GO:0008718">
    <property type="term" value="F:D-amino-acid dehydrogenase activity"/>
    <property type="evidence" value="ECO:0007669"/>
    <property type="project" value="UniProtKB-UniRule"/>
</dbReference>
<dbReference type="GO" id="GO:0055130">
    <property type="term" value="P:D-alanine catabolic process"/>
    <property type="evidence" value="ECO:0007669"/>
    <property type="project" value="UniProtKB-UniPathway"/>
</dbReference>
<dbReference type="FunFam" id="3.50.50.60:FF:000020">
    <property type="entry name" value="D-amino acid dehydrogenase"/>
    <property type="match status" value="1"/>
</dbReference>
<dbReference type="Gene3D" id="3.30.9.10">
    <property type="entry name" value="D-Amino Acid Oxidase, subunit A, domain 2"/>
    <property type="match status" value="1"/>
</dbReference>
<dbReference type="Gene3D" id="3.50.50.60">
    <property type="entry name" value="FAD/NAD(P)-binding domain"/>
    <property type="match status" value="2"/>
</dbReference>
<dbReference type="HAMAP" id="MF_01202">
    <property type="entry name" value="DadA"/>
    <property type="match status" value="1"/>
</dbReference>
<dbReference type="InterPro" id="IPR023080">
    <property type="entry name" value="DadA"/>
</dbReference>
<dbReference type="InterPro" id="IPR006076">
    <property type="entry name" value="FAD-dep_OxRdtase"/>
</dbReference>
<dbReference type="InterPro" id="IPR036188">
    <property type="entry name" value="FAD/NAD-bd_sf"/>
</dbReference>
<dbReference type="NCBIfam" id="NF001933">
    <property type="entry name" value="PRK00711.1"/>
    <property type="match status" value="1"/>
</dbReference>
<dbReference type="PANTHER" id="PTHR13847:SF280">
    <property type="entry name" value="D-AMINO ACID DEHYDROGENASE"/>
    <property type="match status" value="1"/>
</dbReference>
<dbReference type="PANTHER" id="PTHR13847">
    <property type="entry name" value="SARCOSINE DEHYDROGENASE-RELATED"/>
    <property type="match status" value="1"/>
</dbReference>
<dbReference type="Pfam" id="PF01266">
    <property type="entry name" value="DAO"/>
    <property type="match status" value="1"/>
</dbReference>
<dbReference type="SUPFAM" id="SSF54373">
    <property type="entry name" value="FAD-linked reductases, C-terminal domain"/>
    <property type="match status" value="1"/>
</dbReference>
<dbReference type="SUPFAM" id="SSF51905">
    <property type="entry name" value="FAD/NAD(P)-binding domain"/>
    <property type="match status" value="1"/>
</dbReference>
<feature type="chain" id="PRO_1000066072" description="D-amino acid dehydrogenase">
    <location>
        <begin position="1"/>
        <end position="428"/>
    </location>
</feature>
<feature type="binding site" evidence="1">
    <location>
        <begin position="3"/>
        <end position="17"/>
    </location>
    <ligand>
        <name>FAD</name>
        <dbReference type="ChEBI" id="CHEBI:57692"/>
    </ligand>
</feature>
<proteinExistence type="inferred from homology"/>
<keyword id="KW-0274">FAD</keyword>
<keyword id="KW-0285">Flavoprotein</keyword>
<keyword id="KW-0560">Oxidoreductase</keyword>
<sequence>MRVVILGSGVVGVASAYYLARAGHEVTVIDREAGPALETSFANAGQISPGYAAPWAAPGVPLKAVKWMFEKHAPLAIRLDGTRFQLQWMVQMLRNCTAERYAVNKGRMVRLAEYSRDCLQALRADTGIQYEGRTGGTLQLFRTQQQLDGAAKDIAVLQEANVPFELLSPAELKHAEPALAAVSHKLTGGLRLPGDETGDCQLFTTRLAALAESLGVKFRYNTPIDALAIAGGKIAGVQCGSETVRADAYVVALGSYSTNFISNLMKIPVYPLKGYSITAPIVDAAAAPVSTVLDETYKIAITRFDQRIRVGGMAEIVGFDKTLRAARRETLEMCVNDLFPGGGDTSKATFWTGLRPMTPDGTPIVGRTPVSNLFLNTGHGTLGWTMSCGSGQLLADLISGKKPAIQADDLSVHRYLKDAPGQTRPAYA</sequence>
<name>DADA_BURO1</name>
<protein>
    <recommendedName>
        <fullName evidence="1">D-amino acid dehydrogenase</fullName>
        <ecNumber evidence="1">1.4.99.-</ecNumber>
    </recommendedName>
</protein>
<organism>
    <name type="scientific">Burkholderia orbicola (strain AU 1054)</name>
    <dbReference type="NCBI Taxonomy" id="331271"/>
    <lineage>
        <taxon>Bacteria</taxon>
        <taxon>Pseudomonadati</taxon>
        <taxon>Pseudomonadota</taxon>
        <taxon>Betaproteobacteria</taxon>
        <taxon>Burkholderiales</taxon>
        <taxon>Burkholderiaceae</taxon>
        <taxon>Burkholderia</taxon>
        <taxon>Burkholderia cepacia complex</taxon>
        <taxon>Burkholderia orbicola</taxon>
    </lineage>
</organism>
<accession>Q1BY09</accession>
<evidence type="ECO:0000255" key="1">
    <source>
        <dbReference type="HAMAP-Rule" id="MF_01202"/>
    </source>
</evidence>
<gene>
    <name evidence="1" type="primary">dadA</name>
    <name type="ordered locus">Bcen_0585</name>
</gene>
<comment type="function">
    <text evidence="1">Oxidative deamination of D-amino acids.</text>
</comment>
<comment type="catalytic activity">
    <reaction evidence="1">
        <text>a D-alpha-amino acid + A + H2O = a 2-oxocarboxylate + AH2 + NH4(+)</text>
        <dbReference type="Rhea" id="RHEA:18125"/>
        <dbReference type="ChEBI" id="CHEBI:13193"/>
        <dbReference type="ChEBI" id="CHEBI:15377"/>
        <dbReference type="ChEBI" id="CHEBI:17499"/>
        <dbReference type="ChEBI" id="CHEBI:28938"/>
        <dbReference type="ChEBI" id="CHEBI:35179"/>
        <dbReference type="ChEBI" id="CHEBI:59871"/>
    </reaction>
</comment>
<comment type="cofactor">
    <cofactor evidence="1">
        <name>FAD</name>
        <dbReference type="ChEBI" id="CHEBI:57692"/>
    </cofactor>
</comment>
<comment type="pathway">
    <text>Amino-acid degradation; D-alanine degradation; NH(3) and pyruvate from D-alanine: step 1/1.</text>
</comment>
<comment type="similarity">
    <text evidence="1">Belongs to the DadA oxidoreductase family.</text>
</comment>
<reference key="1">
    <citation type="submission" date="2006-05" db="EMBL/GenBank/DDBJ databases">
        <title>Complete sequence of chromosome 1 of Burkholderia cenocepacia AU 1054.</title>
        <authorList>
            <consortium name="US DOE Joint Genome Institute"/>
            <person name="Copeland A."/>
            <person name="Lucas S."/>
            <person name="Lapidus A."/>
            <person name="Barry K."/>
            <person name="Detter J.C."/>
            <person name="Glavina del Rio T."/>
            <person name="Hammon N."/>
            <person name="Israni S."/>
            <person name="Dalin E."/>
            <person name="Tice H."/>
            <person name="Pitluck S."/>
            <person name="Chain P."/>
            <person name="Malfatti S."/>
            <person name="Shin M."/>
            <person name="Vergez L."/>
            <person name="Schmutz J."/>
            <person name="Larimer F."/>
            <person name="Land M."/>
            <person name="Hauser L."/>
            <person name="Kyrpides N."/>
            <person name="Lykidis A."/>
            <person name="LiPuma J.J."/>
            <person name="Konstantinidis K."/>
            <person name="Tiedje J.M."/>
            <person name="Richardson P."/>
        </authorList>
    </citation>
    <scope>NUCLEOTIDE SEQUENCE [LARGE SCALE GENOMIC DNA]</scope>
    <source>
        <strain>AU 1054</strain>
    </source>
</reference>